<dbReference type="EC" id="3.6.5.-" evidence="1"/>
<dbReference type="EMBL" id="CP000249">
    <property type="protein sequence ID" value="ABD10600.1"/>
    <property type="molecule type" value="Genomic_DNA"/>
</dbReference>
<dbReference type="SMR" id="Q2JDP2"/>
<dbReference type="STRING" id="106370.Francci3_1222"/>
<dbReference type="KEGG" id="fra:Francci3_1222"/>
<dbReference type="eggNOG" id="COG0536">
    <property type="taxonomic scope" value="Bacteria"/>
</dbReference>
<dbReference type="HOGENOM" id="CLU_011747_1_3_11"/>
<dbReference type="OrthoDB" id="9807318at2"/>
<dbReference type="PhylomeDB" id="Q2JDP2"/>
<dbReference type="Proteomes" id="UP000001937">
    <property type="component" value="Chromosome"/>
</dbReference>
<dbReference type="GO" id="GO:0005737">
    <property type="term" value="C:cytoplasm"/>
    <property type="evidence" value="ECO:0007669"/>
    <property type="project" value="UniProtKB-SubCell"/>
</dbReference>
<dbReference type="GO" id="GO:0005525">
    <property type="term" value="F:GTP binding"/>
    <property type="evidence" value="ECO:0007669"/>
    <property type="project" value="UniProtKB-UniRule"/>
</dbReference>
<dbReference type="GO" id="GO:0003924">
    <property type="term" value="F:GTPase activity"/>
    <property type="evidence" value="ECO:0007669"/>
    <property type="project" value="UniProtKB-UniRule"/>
</dbReference>
<dbReference type="GO" id="GO:0000287">
    <property type="term" value="F:magnesium ion binding"/>
    <property type="evidence" value="ECO:0007669"/>
    <property type="project" value="InterPro"/>
</dbReference>
<dbReference type="GO" id="GO:0042254">
    <property type="term" value="P:ribosome biogenesis"/>
    <property type="evidence" value="ECO:0007669"/>
    <property type="project" value="UniProtKB-UniRule"/>
</dbReference>
<dbReference type="CDD" id="cd01898">
    <property type="entry name" value="Obg"/>
    <property type="match status" value="1"/>
</dbReference>
<dbReference type="FunFam" id="2.70.210.12:FF:000001">
    <property type="entry name" value="GTPase Obg"/>
    <property type="match status" value="1"/>
</dbReference>
<dbReference type="Gene3D" id="3.30.300.350">
    <property type="entry name" value="GTP-binding protein OBG, C-terminal domain"/>
    <property type="match status" value="1"/>
</dbReference>
<dbReference type="Gene3D" id="2.70.210.12">
    <property type="entry name" value="GTP1/OBG domain"/>
    <property type="match status" value="1"/>
</dbReference>
<dbReference type="Gene3D" id="3.40.50.300">
    <property type="entry name" value="P-loop containing nucleotide triphosphate hydrolases"/>
    <property type="match status" value="1"/>
</dbReference>
<dbReference type="HAMAP" id="MF_01454">
    <property type="entry name" value="GTPase_Obg"/>
    <property type="match status" value="1"/>
</dbReference>
<dbReference type="InterPro" id="IPR031167">
    <property type="entry name" value="G_OBG"/>
</dbReference>
<dbReference type="InterPro" id="IPR006073">
    <property type="entry name" value="GTP-bd"/>
</dbReference>
<dbReference type="InterPro" id="IPR014100">
    <property type="entry name" value="GTP-bd_Obg/CgtA"/>
</dbReference>
<dbReference type="InterPro" id="IPR036346">
    <property type="entry name" value="GTP-bd_prot_GTP1/OBG_C_sf"/>
</dbReference>
<dbReference type="InterPro" id="IPR006074">
    <property type="entry name" value="GTP1-OBG_CS"/>
</dbReference>
<dbReference type="InterPro" id="IPR006169">
    <property type="entry name" value="GTP1_OBG_dom"/>
</dbReference>
<dbReference type="InterPro" id="IPR036726">
    <property type="entry name" value="GTP1_OBG_dom_sf"/>
</dbReference>
<dbReference type="InterPro" id="IPR045086">
    <property type="entry name" value="OBG_GTPase"/>
</dbReference>
<dbReference type="InterPro" id="IPR015349">
    <property type="entry name" value="OCT_dom"/>
</dbReference>
<dbReference type="InterPro" id="IPR027417">
    <property type="entry name" value="P-loop_NTPase"/>
</dbReference>
<dbReference type="NCBIfam" id="TIGR02729">
    <property type="entry name" value="Obg_CgtA"/>
    <property type="match status" value="1"/>
</dbReference>
<dbReference type="NCBIfam" id="TIGR03595">
    <property type="entry name" value="Obg_CgtA_exten"/>
    <property type="match status" value="1"/>
</dbReference>
<dbReference type="NCBIfam" id="NF008954">
    <property type="entry name" value="PRK12296.1"/>
    <property type="match status" value="1"/>
</dbReference>
<dbReference type="NCBIfam" id="NF008955">
    <property type="entry name" value="PRK12297.1"/>
    <property type="match status" value="1"/>
</dbReference>
<dbReference type="NCBIfam" id="NF008956">
    <property type="entry name" value="PRK12299.1"/>
    <property type="match status" value="1"/>
</dbReference>
<dbReference type="PANTHER" id="PTHR11702">
    <property type="entry name" value="DEVELOPMENTALLY REGULATED GTP-BINDING PROTEIN-RELATED"/>
    <property type="match status" value="1"/>
</dbReference>
<dbReference type="PANTHER" id="PTHR11702:SF31">
    <property type="entry name" value="MITOCHONDRIAL RIBOSOME-ASSOCIATED GTPASE 2"/>
    <property type="match status" value="1"/>
</dbReference>
<dbReference type="Pfam" id="PF09269">
    <property type="entry name" value="DUF1967"/>
    <property type="match status" value="1"/>
</dbReference>
<dbReference type="Pfam" id="PF01018">
    <property type="entry name" value="GTP1_OBG"/>
    <property type="match status" value="1"/>
</dbReference>
<dbReference type="Pfam" id="PF01926">
    <property type="entry name" value="MMR_HSR1"/>
    <property type="match status" value="1"/>
</dbReference>
<dbReference type="PRINTS" id="PR00326">
    <property type="entry name" value="GTP1OBG"/>
</dbReference>
<dbReference type="SUPFAM" id="SSF102741">
    <property type="entry name" value="Obg GTP-binding protein C-terminal domain"/>
    <property type="match status" value="1"/>
</dbReference>
<dbReference type="SUPFAM" id="SSF82051">
    <property type="entry name" value="Obg GTP-binding protein N-terminal domain"/>
    <property type="match status" value="1"/>
</dbReference>
<dbReference type="SUPFAM" id="SSF52540">
    <property type="entry name" value="P-loop containing nucleoside triphosphate hydrolases"/>
    <property type="match status" value="1"/>
</dbReference>
<dbReference type="PROSITE" id="PS51710">
    <property type="entry name" value="G_OBG"/>
    <property type="match status" value="1"/>
</dbReference>
<dbReference type="PROSITE" id="PS00905">
    <property type="entry name" value="GTP1_OBG"/>
    <property type="match status" value="1"/>
</dbReference>
<dbReference type="PROSITE" id="PS51883">
    <property type="entry name" value="OBG"/>
    <property type="match status" value="1"/>
</dbReference>
<dbReference type="PROSITE" id="PS51881">
    <property type="entry name" value="OCT"/>
    <property type="match status" value="1"/>
</dbReference>
<keyword id="KW-0963">Cytoplasm</keyword>
<keyword id="KW-0342">GTP-binding</keyword>
<keyword id="KW-0378">Hydrolase</keyword>
<keyword id="KW-0460">Magnesium</keyword>
<keyword id="KW-0479">Metal-binding</keyword>
<keyword id="KW-0547">Nucleotide-binding</keyword>
<keyword id="KW-1185">Reference proteome</keyword>
<comment type="function">
    <text evidence="1">An essential GTPase which binds GTP, GDP and possibly (p)ppGpp with moderate affinity, with high nucleotide exchange rates and a fairly low GTP hydrolysis rate. Plays a role in control of the cell cycle, stress response, ribosome biogenesis and in those bacteria that undergo differentiation, in morphogenesis control.</text>
</comment>
<comment type="cofactor">
    <cofactor evidence="1">
        <name>Mg(2+)</name>
        <dbReference type="ChEBI" id="CHEBI:18420"/>
    </cofactor>
</comment>
<comment type="subunit">
    <text evidence="1">Monomer.</text>
</comment>
<comment type="subcellular location">
    <subcellularLocation>
        <location evidence="1">Cytoplasm</location>
    </subcellularLocation>
</comment>
<comment type="similarity">
    <text evidence="1">Belongs to the TRAFAC class OBG-HflX-like GTPase superfamily. OBG GTPase family.</text>
</comment>
<sequence>MPTFVDRVVLHATAGDGGHGCASIHREKFKPLGGPDGGDGGRGGDVRLVVDPSVTTLLDFHFHPHQRASRGRPGQGSNRHGADGADLVLPVPDGTVVLTEDGEQIIDLVGPGSAFVLARGGRGGRGNAALASARRKAPGFAELGEPGEQLDAVLELKTVADVALVGFPSAGKSSLVSVLSAAKPKIADYPFTTLVPNLGVAQAGDRPPYTVADVPGLIPGASEGRGLGLEFLRHIERCSVIVHVLDCATLEPGRDPMTDLDVIEAELAAYSADLSDRPRLVVLNKIDVPDAAELAELVAPELRARDLAVFAVSTATRRGVHALSLALADLVAQHRAAAPARAATRIVLRPRAVNEPDFTVRPLGDGFLITGSKPERWVRQTDFTNDEAIGFLADRLARLGVEKELARLGATAGAEVTIGEVTFDWEPTLSGGGLGNGGLGVDDHPGGDGLAETGPGGRGPAGTAASGAAPSPGRGGDTGSSVSLGPRGTDDRLRASVRLTRAERMARRAAAVVDPAVRGEPAGRGEEEG</sequence>
<feature type="chain" id="PRO_0000385945" description="GTPase Obg">
    <location>
        <begin position="1"/>
        <end position="529"/>
    </location>
</feature>
<feature type="domain" description="Obg" evidence="3">
    <location>
        <begin position="2"/>
        <end position="159"/>
    </location>
</feature>
<feature type="domain" description="OBG-type G" evidence="1">
    <location>
        <begin position="160"/>
        <end position="332"/>
    </location>
</feature>
<feature type="domain" description="OCT" evidence="2">
    <location>
        <begin position="350"/>
        <end position="427"/>
    </location>
</feature>
<feature type="region of interest" description="Disordered" evidence="4">
    <location>
        <begin position="62"/>
        <end position="86"/>
    </location>
</feature>
<feature type="region of interest" description="Disordered" evidence="4">
    <location>
        <begin position="434"/>
        <end position="494"/>
    </location>
</feature>
<feature type="region of interest" description="Disordered" evidence="4">
    <location>
        <begin position="506"/>
        <end position="529"/>
    </location>
</feature>
<feature type="compositionally biased region" description="Low complexity" evidence="4">
    <location>
        <begin position="461"/>
        <end position="472"/>
    </location>
</feature>
<feature type="compositionally biased region" description="Low complexity" evidence="4">
    <location>
        <begin position="508"/>
        <end position="520"/>
    </location>
</feature>
<feature type="binding site" evidence="1">
    <location>
        <begin position="166"/>
        <end position="173"/>
    </location>
    <ligand>
        <name>GTP</name>
        <dbReference type="ChEBI" id="CHEBI:37565"/>
    </ligand>
</feature>
<feature type="binding site" evidence="1">
    <location>
        <position position="173"/>
    </location>
    <ligand>
        <name>Mg(2+)</name>
        <dbReference type="ChEBI" id="CHEBI:18420"/>
    </ligand>
</feature>
<feature type="binding site" evidence="1">
    <location>
        <begin position="191"/>
        <end position="195"/>
    </location>
    <ligand>
        <name>GTP</name>
        <dbReference type="ChEBI" id="CHEBI:37565"/>
    </ligand>
</feature>
<feature type="binding site" evidence="1">
    <location>
        <position position="193"/>
    </location>
    <ligand>
        <name>Mg(2+)</name>
        <dbReference type="ChEBI" id="CHEBI:18420"/>
    </ligand>
</feature>
<feature type="binding site" evidence="1">
    <location>
        <begin position="213"/>
        <end position="216"/>
    </location>
    <ligand>
        <name>GTP</name>
        <dbReference type="ChEBI" id="CHEBI:37565"/>
    </ligand>
</feature>
<feature type="binding site" evidence="1">
    <location>
        <begin position="284"/>
        <end position="287"/>
    </location>
    <ligand>
        <name>GTP</name>
        <dbReference type="ChEBI" id="CHEBI:37565"/>
    </ligand>
</feature>
<feature type="binding site" evidence="1">
    <location>
        <begin position="313"/>
        <end position="315"/>
    </location>
    <ligand>
        <name>GTP</name>
        <dbReference type="ChEBI" id="CHEBI:37565"/>
    </ligand>
</feature>
<gene>
    <name evidence="1" type="primary">obg</name>
    <name type="ordered locus">Francci3_1222</name>
</gene>
<reference key="1">
    <citation type="journal article" date="2007" name="Genome Res.">
        <title>Genome characteristics of facultatively symbiotic Frankia sp. strains reflect host range and host plant biogeography.</title>
        <authorList>
            <person name="Normand P."/>
            <person name="Lapierre P."/>
            <person name="Tisa L.S."/>
            <person name="Gogarten J.P."/>
            <person name="Alloisio N."/>
            <person name="Bagnarol E."/>
            <person name="Bassi C.A."/>
            <person name="Berry A.M."/>
            <person name="Bickhart D.M."/>
            <person name="Choisne N."/>
            <person name="Couloux A."/>
            <person name="Cournoyer B."/>
            <person name="Cruveiller S."/>
            <person name="Daubin V."/>
            <person name="Demange N."/>
            <person name="Francino M.P."/>
            <person name="Goltsman E."/>
            <person name="Huang Y."/>
            <person name="Kopp O.R."/>
            <person name="Labarre L."/>
            <person name="Lapidus A."/>
            <person name="Lavire C."/>
            <person name="Marechal J."/>
            <person name="Martinez M."/>
            <person name="Mastronunzio J.E."/>
            <person name="Mullin B.C."/>
            <person name="Niemann J."/>
            <person name="Pujic P."/>
            <person name="Rawnsley T."/>
            <person name="Rouy Z."/>
            <person name="Schenowitz C."/>
            <person name="Sellstedt A."/>
            <person name="Tavares F."/>
            <person name="Tomkins J.P."/>
            <person name="Vallenet D."/>
            <person name="Valverde C."/>
            <person name="Wall L.G."/>
            <person name="Wang Y."/>
            <person name="Medigue C."/>
            <person name="Benson D.R."/>
        </authorList>
    </citation>
    <scope>NUCLEOTIDE SEQUENCE [LARGE SCALE GENOMIC DNA]</scope>
    <source>
        <strain>DSM 45818 / CECT 9043 / HFP020203 / CcI3</strain>
    </source>
</reference>
<name>OBG_FRACC</name>
<evidence type="ECO:0000255" key="1">
    <source>
        <dbReference type="HAMAP-Rule" id="MF_01454"/>
    </source>
</evidence>
<evidence type="ECO:0000255" key="2">
    <source>
        <dbReference type="PROSITE-ProRule" id="PRU01229"/>
    </source>
</evidence>
<evidence type="ECO:0000255" key="3">
    <source>
        <dbReference type="PROSITE-ProRule" id="PRU01231"/>
    </source>
</evidence>
<evidence type="ECO:0000256" key="4">
    <source>
        <dbReference type="SAM" id="MobiDB-lite"/>
    </source>
</evidence>
<accession>Q2JDP2</accession>
<protein>
    <recommendedName>
        <fullName evidence="1">GTPase Obg</fullName>
        <ecNumber evidence="1">3.6.5.-</ecNumber>
    </recommendedName>
    <alternativeName>
        <fullName evidence="1">GTP-binding protein Obg</fullName>
    </alternativeName>
</protein>
<organism>
    <name type="scientific">Frankia casuarinae (strain DSM 45818 / CECT 9043 / HFP020203 / CcI3)</name>
    <dbReference type="NCBI Taxonomy" id="106370"/>
    <lineage>
        <taxon>Bacteria</taxon>
        <taxon>Bacillati</taxon>
        <taxon>Actinomycetota</taxon>
        <taxon>Actinomycetes</taxon>
        <taxon>Frankiales</taxon>
        <taxon>Frankiaceae</taxon>
        <taxon>Frankia</taxon>
    </lineage>
</organism>
<proteinExistence type="inferred from homology"/>